<keyword id="KW-0963">Cytoplasm</keyword>
<keyword id="KW-0489">Methyltransferase</keyword>
<keyword id="KW-0949">S-adenosyl-L-methionine</keyword>
<keyword id="KW-0808">Transferase</keyword>
<protein>
    <recommendedName>
        <fullName evidence="1">Ribosomal protein L11 methyltransferase</fullName>
        <shortName evidence="1">L11 Mtase</shortName>
        <ecNumber evidence="1">2.1.1.-</ecNumber>
    </recommendedName>
</protein>
<sequence>MPWLQVRLAISPEQAETYEDALLEVGAVSVTFMDAEDQPIFEPELNTTPLWTHTHLLALFEADTNAEMALAHLSLLTGEELPEHSAEVIEDQDWERSWMDNFQPMCFGKRLWIVPSWHAAPQPDAVNLLLDPGLAFGTGTHPTTALCLEWLDGQDLKGCNVLDFGCGSGILAIAALLLGAEQAVGTDIDVQALEASRDNAGRNKIAAERFPLYLPEDLPHQQADVLVANILAGPLVSLAPQLASLVRTGGRLALSGILAEQGEEVAAAYADSFDLDPIANRDGWVRITGRRR</sequence>
<organism>
    <name type="scientific">Pseudomonas savastanoi pv. phaseolicola (strain 1448A / Race 6)</name>
    <name type="common">Pseudomonas syringae pv. phaseolicola (strain 1448A / Race 6)</name>
    <dbReference type="NCBI Taxonomy" id="264730"/>
    <lineage>
        <taxon>Bacteria</taxon>
        <taxon>Pseudomonadati</taxon>
        <taxon>Pseudomonadota</taxon>
        <taxon>Gammaproteobacteria</taxon>
        <taxon>Pseudomonadales</taxon>
        <taxon>Pseudomonadaceae</taxon>
        <taxon>Pseudomonas</taxon>
    </lineage>
</organism>
<reference key="1">
    <citation type="journal article" date="2005" name="J. Bacteriol.">
        <title>Whole-genome sequence analysis of Pseudomonas syringae pv. phaseolicola 1448A reveals divergence among pathovars in genes involved in virulence and transposition.</title>
        <authorList>
            <person name="Joardar V."/>
            <person name="Lindeberg M."/>
            <person name="Jackson R.W."/>
            <person name="Selengut J."/>
            <person name="Dodson R."/>
            <person name="Brinkac L.M."/>
            <person name="Daugherty S.C."/>
            <person name="DeBoy R.T."/>
            <person name="Durkin A.S."/>
            <person name="Gwinn Giglio M."/>
            <person name="Madupu R."/>
            <person name="Nelson W.C."/>
            <person name="Rosovitz M.J."/>
            <person name="Sullivan S.A."/>
            <person name="Crabtree J."/>
            <person name="Creasy T."/>
            <person name="Davidsen T.M."/>
            <person name="Haft D.H."/>
            <person name="Zafar N."/>
            <person name="Zhou L."/>
            <person name="Halpin R."/>
            <person name="Holley T."/>
            <person name="Khouri H.M."/>
            <person name="Feldblyum T.V."/>
            <person name="White O."/>
            <person name="Fraser C.M."/>
            <person name="Chatterjee A.K."/>
            <person name="Cartinhour S."/>
            <person name="Schneider D."/>
            <person name="Mansfield J.W."/>
            <person name="Collmer A."/>
            <person name="Buell R."/>
        </authorList>
    </citation>
    <scope>NUCLEOTIDE SEQUENCE [LARGE SCALE GENOMIC DNA]</scope>
    <source>
        <strain>1448A / Race 6</strain>
    </source>
</reference>
<feature type="chain" id="PRO_1000046062" description="Ribosomal protein L11 methyltransferase">
    <location>
        <begin position="1"/>
        <end position="292"/>
    </location>
</feature>
<feature type="binding site" evidence="1">
    <location>
        <position position="144"/>
    </location>
    <ligand>
        <name>S-adenosyl-L-methionine</name>
        <dbReference type="ChEBI" id="CHEBI:59789"/>
    </ligand>
</feature>
<feature type="binding site" evidence="1">
    <location>
        <position position="165"/>
    </location>
    <ligand>
        <name>S-adenosyl-L-methionine</name>
        <dbReference type="ChEBI" id="CHEBI:59789"/>
    </ligand>
</feature>
<feature type="binding site" evidence="1">
    <location>
        <position position="187"/>
    </location>
    <ligand>
        <name>S-adenosyl-L-methionine</name>
        <dbReference type="ChEBI" id="CHEBI:59789"/>
    </ligand>
</feature>
<feature type="binding site" evidence="1">
    <location>
        <position position="229"/>
    </location>
    <ligand>
        <name>S-adenosyl-L-methionine</name>
        <dbReference type="ChEBI" id="CHEBI:59789"/>
    </ligand>
</feature>
<accession>Q48DI0</accession>
<dbReference type="EC" id="2.1.1.-" evidence="1"/>
<dbReference type="EMBL" id="CP000058">
    <property type="protein sequence ID" value="AAZ35460.1"/>
    <property type="molecule type" value="Genomic_DNA"/>
</dbReference>
<dbReference type="RefSeq" id="WP_004666303.1">
    <property type="nucleotide sequence ID" value="NC_005773.3"/>
</dbReference>
<dbReference type="SMR" id="Q48DI0"/>
<dbReference type="KEGG" id="psp:PSPPH_4445"/>
<dbReference type="eggNOG" id="COG2264">
    <property type="taxonomic scope" value="Bacteria"/>
</dbReference>
<dbReference type="HOGENOM" id="CLU_049382_4_1_6"/>
<dbReference type="Proteomes" id="UP000000551">
    <property type="component" value="Chromosome"/>
</dbReference>
<dbReference type="GO" id="GO:0005829">
    <property type="term" value="C:cytosol"/>
    <property type="evidence" value="ECO:0007669"/>
    <property type="project" value="TreeGrafter"/>
</dbReference>
<dbReference type="GO" id="GO:0016279">
    <property type="term" value="F:protein-lysine N-methyltransferase activity"/>
    <property type="evidence" value="ECO:0007669"/>
    <property type="project" value="TreeGrafter"/>
</dbReference>
<dbReference type="GO" id="GO:0032259">
    <property type="term" value="P:methylation"/>
    <property type="evidence" value="ECO:0007669"/>
    <property type="project" value="UniProtKB-KW"/>
</dbReference>
<dbReference type="CDD" id="cd02440">
    <property type="entry name" value="AdoMet_MTases"/>
    <property type="match status" value="1"/>
</dbReference>
<dbReference type="Gene3D" id="3.40.50.150">
    <property type="entry name" value="Vaccinia Virus protein VP39"/>
    <property type="match status" value="1"/>
</dbReference>
<dbReference type="HAMAP" id="MF_00735">
    <property type="entry name" value="Methyltr_PrmA"/>
    <property type="match status" value="1"/>
</dbReference>
<dbReference type="InterPro" id="IPR050078">
    <property type="entry name" value="Ribosomal_L11_MeTrfase_PrmA"/>
</dbReference>
<dbReference type="InterPro" id="IPR004498">
    <property type="entry name" value="Ribosomal_PrmA_MeTrfase"/>
</dbReference>
<dbReference type="InterPro" id="IPR029063">
    <property type="entry name" value="SAM-dependent_MTases_sf"/>
</dbReference>
<dbReference type="NCBIfam" id="TIGR00406">
    <property type="entry name" value="prmA"/>
    <property type="match status" value="1"/>
</dbReference>
<dbReference type="PANTHER" id="PTHR43648">
    <property type="entry name" value="ELECTRON TRANSFER FLAVOPROTEIN BETA SUBUNIT LYSINE METHYLTRANSFERASE"/>
    <property type="match status" value="1"/>
</dbReference>
<dbReference type="PANTHER" id="PTHR43648:SF1">
    <property type="entry name" value="ELECTRON TRANSFER FLAVOPROTEIN BETA SUBUNIT LYSINE METHYLTRANSFERASE"/>
    <property type="match status" value="1"/>
</dbReference>
<dbReference type="Pfam" id="PF06325">
    <property type="entry name" value="PrmA"/>
    <property type="match status" value="1"/>
</dbReference>
<dbReference type="PIRSF" id="PIRSF000401">
    <property type="entry name" value="RPL11_MTase"/>
    <property type="match status" value="1"/>
</dbReference>
<dbReference type="SUPFAM" id="SSF53335">
    <property type="entry name" value="S-adenosyl-L-methionine-dependent methyltransferases"/>
    <property type="match status" value="1"/>
</dbReference>
<name>PRMA_PSE14</name>
<gene>
    <name evidence="1" type="primary">prmA</name>
    <name type="ordered locus">PSPPH_4445</name>
</gene>
<proteinExistence type="inferred from homology"/>
<evidence type="ECO:0000255" key="1">
    <source>
        <dbReference type="HAMAP-Rule" id="MF_00735"/>
    </source>
</evidence>
<comment type="function">
    <text evidence="1">Methylates ribosomal protein L11.</text>
</comment>
<comment type="catalytic activity">
    <reaction evidence="1">
        <text>L-lysyl-[protein] + 3 S-adenosyl-L-methionine = N(6),N(6),N(6)-trimethyl-L-lysyl-[protein] + 3 S-adenosyl-L-homocysteine + 3 H(+)</text>
        <dbReference type="Rhea" id="RHEA:54192"/>
        <dbReference type="Rhea" id="RHEA-COMP:9752"/>
        <dbReference type="Rhea" id="RHEA-COMP:13826"/>
        <dbReference type="ChEBI" id="CHEBI:15378"/>
        <dbReference type="ChEBI" id="CHEBI:29969"/>
        <dbReference type="ChEBI" id="CHEBI:57856"/>
        <dbReference type="ChEBI" id="CHEBI:59789"/>
        <dbReference type="ChEBI" id="CHEBI:61961"/>
    </reaction>
</comment>
<comment type="subcellular location">
    <subcellularLocation>
        <location evidence="1">Cytoplasm</location>
    </subcellularLocation>
</comment>
<comment type="similarity">
    <text evidence="1">Belongs to the methyltransferase superfamily. PrmA family.</text>
</comment>